<evidence type="ECO:0000255" key="1">
    <source>
        <dbReference type="HAMAP-Rule" id="MF_00086"/>
    </source>
</evidence>
<accession>Q0AEV7</accession>
<name>METK_NITEC</name>
<sequence length="387" mass="42057">MSNYLFTSESVSEGHPDKVADQISDAILDAILQQDPHARVACETMCSTGLIVLSGEITTHATIDYNVIPRDTVREIGYTSSEIGFDASTCAVLTAFNKQSPDIALGVNRSKEEEMDQGAGDQGLMFGYACDETPQLMPLPIYYAHRLVEQQAKLRKSGQLSWLRPDAKSQVSVRYIDGKPKNIETVVISTQHDPDISNGDLFEGVVEEIIKPVLPAEMLSSDIRYLVNPTGRFVVGGPMGDCGLTGRKIIVDTYGGTAHHGGGAFSGKDPSKVDRSAAYAARYVAKNIVAAGLARKCEVQVAYAIGVAKPVSLMLETFGTGKVSDEKLAELITRNFDLRPRAIIHELNLLRPIYSKTAAYGHFGREEPSFTWEKTDIAEQLIADAGI</sequence>
<dbReference type="EC" id="2.5.1.6" evidence="1"/>
<dbReference type="EMBL" id="CP000450">
    <property type="protein sequence ID" value="ABI60125.1"/>
    <property type="molecule type" value="Genomic_DNA"/>
</dbReference>
<dbReference type="RefSeq" id="WP_011634927.1">
    <property type="nucleotide sequence ID" value="NC_008344.1"/>
</dbReference>
<dbReference type="SMR" id="Q0AEV7"/>
<dbReference type="STRING" id="335283.Neut_1893"/>
<dbReference type="KEGG" id="net:Neut_1893"/>
<dbReference type="eggNOG" id="COG0192">
    <property type="taxonomic scope" value="Bacteria"/>
</dbReference>
<dbReference type="HOGENOM" id="CLU_041802_1_1_4"/>
<dbReference type="OrthoDB" id="9801686at2"/>
<dbReference type="UniPathway" id="UPA00315">
    <property type="reaction ID" value="UER00080"/>
</dbReference>
<dbReference type="Proteomes" id="UP000001966">
    <property type="component" value="Chromosome"/>
</dbReference>
<dbReference type="GO" id="GO:0005737">
    <property type="term" value="C:cytoplasm"/>
    <property type="evidence" value="ECO:0007669"/>
    <property type="project" value="UniProtKB-SubCell"/>
</dbReference>
<dbReference type="GO" id="GO:0005524">
    <property type="term" value="F:ATP binding"/>
    <property type="evidence" value="ECO:0007669"/>
    <property type="project" value="UniProtKB-UniRule"/>
</dbReference>
<dbReference type="GO" id="GO:0000287">
    <property type="term" value="F:magnesium ion binding"/>
    <property type="evidence" value="ECO:0007669"/>
    <property type="project" value="UniProtKB-UniRule"/>
</dbReference>
<dbReference type="GO" id="GO:0004478">
    <property type="term" value="F:methionine adenosyltransferase activity"/>
    <property type="evidence" value="ECO:0007669"/>
    <property type="project" value="UniProtKB-UniRule"/>
</dbReference>
<dbReference type="GO" id="GO:0006730">
    <property type="term" value="P:one-carbon metabolic process"/>
    <property type="evidence" value="ECO:0007669"/>
    <property type="project" value="UniProtKB-KW"/>
</dbReference>
<dbReference type="GO" id="GO:0006556">
    <property type="term" value="P:S-adenosylmethionine biosynthetic process"/>
    <property type="evidence" value="ECO:0007669"/>
    <property type="project" value="UniProtKB-UniRule"/>
</dbReference>
<dbReference type="CDD" id="cd18079">
    <property type="entry name" value="S-AdoMet_synt"/>
    <property type="match status" value="1"/>
</dbReference>
<dbReference type="FunFam" id="3.30.300.10:FF:000003">
    <property type="entry name" value="S-adenosylmethionine synthase"/>
    <property type="match status" value="1"/>
</dbReference>
<dbReference type="FunFam" id="3.30.300.10:FF:000004">
    <property type="entry name" value="S-adenosylmethionine synthase"/>
    <property type="match status" value="1"/>
</dbReference>
<dbReference type="Gene3D" id="3.30.300.10">
    <property type="match status" value="3"/>
</dbReference>
<dbReference type="HAMAP" id="MF_00086">
    <property type="entry name" value="S_AdoMet_synth1"/>
    <property type="match status" value="1"/>
</dbReference>
<dbReference type="InterPro" id="IPR022631">
    <property type="entry name" value="ADOMET_SYNTHASE_CS"/>
</dbReference>
<dbReference type="InterPro" id="IPR022630">
    <property type="entry name" value="S-AdoMet_synt_C"/>
</dbReference>
<dbReference type="InterPro" id="IPR022629">
    <property type="entry name" value="S-AdoMet_synt_central"/>
</dbReference>
<dbReference type="InterPro" id="IPR022628">
    <property type="entry name" value="S-AdoMet_synt_N"/>
</dbReference>
<dbReference type="InterPro" id="IPR002133">
    <property type="entry name" value="S-AdoMet_synthetase"/>
</dbReference>
<dbReference type="InterPro" id="IPR022636">
    <property type="entry name" value="S-AdoMet_synthetase_sfam"/>
</dbReference>
<dbReference type="NCBIfam" id="TIGR01034">
    <property type="entry name" value="metK"/>
    <property type="match status" value="1"/>
</dbReference>
<dbReference type="PANTHER" id="PTHR11964">
    <property type="entry name" value="S-ADENOSYLMETHIONINE SYNTHETASE"/>
    <property type="match status" value="1"/>
</dbReference>
<dbReference type="Pfam" id="PF02773">
    <property type="entry name" value="S-AdoMet_synt_C"/>
    <property type="match status" value="1"/>
</dbReference>
<dbReference type="Pfam" id="PF02772">
    <property type="entry name" value="S-AdoMet_synt_M"/>
    <property type="match status" value="1"/>
</dbReference>
<dbReference type="Pfam" id="PF00438">
    <property type="entry name" value="S-AdoMet_synt_N"/>
    <property type="match status" value="1"/>
</dbReference>
<dbReference type="PIRSF" id="PIRSF000497">
    <property type="entry name" value="MAT"/>
    <property type="match status" value="1"/>
</dbReference>
<dbReference type="SUPFAM" id="SSF55973">
    <property type="entry name" value="S-adenosylmethionine synthetase"/>
    <property type="match status" value="3"/>
</dbReference>
<dbReference type="PROSITE" id="PS00376">
    <property type="entry name" value="ADOMET_SYNTHASE_1"/>
    <property type="match status" value="1"/>
</dbReference>
<dbReference type="PROSITE" id="PS00377">
    <property type="entry name" value="ADOMET_SYNTHASE_2"/>
    <property type="match status" value="1"/>
</dbReference>
<comment type="function">
    <text evidence="1">Catalyzes the formation of S-adenosylmethionine (AdoMet) from methionine and ATP. The overall synthetic reaction is composed of two sequential steps, AdoMet formation and the subsequent tripolyphosphate hydrolysis which occurs prior to release of AdoMet from the enzyme.</text>
</comment>
<comment type="catalytic activity">
    <reaction evidence="1">
        <text>L-methionine + ATP + H2O = S-adenosyl-L-methionine + phosphate + diphosphate</text>
        <dbReference type="Rhea" id="RHEA:21080"/>
        <dbReference type="ChEBI" id="CHEBI:15377"/>
        <dbReference type="ChEBI" id="CHEBI:30616"/>
        <dbReference type="ChEBI" id="CHEBI:33019"/>
        <dbReference type="ChEBI" id="CHEBI:43474"/>
        <dbReference type="ChEBI" id="CHEBI:57844"/>
        <dbReference type="ChEBI" id="CHEBI:59789"/>
        <dbReference type="EC" id="2.5.1.6"/>
    </reaction>
</comment>
<comment type="cofactor">
    <cofactor evidence="1">
        <name>Mg(2+)</name>
        <dbReference type="ChEBI" id="CHEBI:18420"/>
    </cofactor>
    <text evidence="1">Binds 2 divalent ions per subunit.</text>
</comment>
<comment type="cofactor">
    <cofactor evidence="1">
        <name>K(+)</name>
        <dbReference type="ChEBI" id="CHEBI:29103"/>
    </cofactor>
    <text evidence="1">Binds 1 potassium ion per subunit.</text>
</comment>
<comment type="pathway">
    <text evidence="1">Amino-acid biosynthesis; S-adenosyl-L-methionine biosynthesis; S-adenosyl-L-methionine from L-methionine: step 1/1.</text>
</comment>
<comment type="subunit">
    <text evidence="1">Homotetramer; dimer of dimers.</text>
</comment>
<comment type="subcellular location">
    <subcellularLocation>
        <location evidence="1">Cytoplasm</location>
    </subcellularLocation>
</comment>
<comment type="similarity">
    <text evidence="1">Belongs to the AdoMet synthase family.</text>
</comment>
<proteinExistence type="inferred from homology"/>
<organism>
    <name type="scientific">Nitrosomonas eutropha (strain DSM 101675 / C91 / Nm57)</name>
    <dbReference type="NCBI Taxonomy" id="335283"/>
    <lineage>
        <taxon>Bacteria</taxon>
        <taxon>Pseudomonadati</taxon>
        <taxon>Pseudomonadota</taxon>
        <taxon>Betaproteobacteria</taxon>
        <taxon>Nitrosomonadales</taxon>
        <taxon>Nitrosomonadaceae</taxon>
        <taxon>Nitrosomonas</taxon>
    </lineage>
</organism>
<feature type="chain" id="PRO_0000302951" description="S-adenosylmethionine synthase">
    <location>
        <begin position="1"/>
        <end position="387"/>
    </location>
</feature>
<feature type="region of interest" description="Flexible loop" evidence="1">
    <location>
        <begin position="99"/>
        <end position="109"/>
    </location>
</feature>
<feature type="binding site" description="in other chain" evidence="1">
    <location>
        <position position="15"/>
    </location>
    <ligand>
        <name>ATP</name>
        <dbReference type="ChEBI" id="CHEBI:30616"/>
        <note>ligand shared between two neighboring subunits</note>
    </ligand>
</feature>
<feature type="binding site" evidence="1">
    <location>
        <position position="17"/>
    </location>
    <ligand>
        <name>Mg(2+)</name>
        <dbReference type="ChEBI" id="CHEBI:18420"/>
    </ligand>
</feature>
<feature type="binding site" evidence="1">
    <location>
        <position position="43"/>
    </location>
    <ligand>
        <name>K(+)</name>
        <dbReference type="ChEBI" id="CHEBI:29103"/>
    </ligand>
</feature>
<feature type="binding site" description="in other chain" evidence="1">
    <location>
        <position position="56"/>
    </location>
    <ligand>
        <name>L-methionine</name>
        <dbReference type="ChEBI" id="CHEBI:57844"/>
        <note>ligand shared between two neighboring subunits</note>
    </ligand>
</feature>
<feature type="binding site" description="in other chain" evidence="1">
    <location>
        <position position="99"/>
    </location>
    <ligand>
        <name>L-methionine</name>
        <dbReference type="ChEBI" id="CHEBI:57844"/>
        <note>ligand shared between two neighboring subunits</note>
    </ligand>
</feature>
<feature type="binding site" description="in other chain" evidence="1">
    <location>
        <begin position="166"/>
        <end position="168"/>
    </location>
    <ligand>
        <name>ATP</name>
        <dbReference type="ChEBI" id="CHEBI:30616"/>
        <note>ligand shared between two neighboring subunits</note>
    </ligand>
</feature>
<feature type="binding site" description="in other chain" evidence="1">
    <location>
        <begin position="232"/>
        <end position="233"/>
    </location>
    <ligand>
        <name>ATP</name>
        <dbReference type="ChEBI" id="CHEBI:30616"/>
        <note>ligand shared between two neighboring subunits</note>
    </ligand>
</feature>
<feature type="binding site" evidence="1">
    <location>
        <position position="241"/>
    </location>
    <ligand>
        <name>ATP</name>
        <dbReference type="ChEBI" id="CHEBI:30616"/>
        <note>ligand shared between two neighboring subunits</note>
    </ligand>
</feature>
<feature type="binding site" evidence="1">
    <location>
        <position position="241"/>
    </location>
    <ligand>
        <name>L-methionine</name>
        <dbReference type="ChEBI" id="CHEBI:57844"/>
        <note>ligand shared between two neighboring subunits</note>
    </ligand>
</feature>
<feature type="binding site" description="in other chain" evidence="1">
    <location>
        <begin position="247"/>
        <end position="248"/>
    </location>
    <ligand>
        <name>ATP</name>
        <dbReference type="ChEBI" id="CHEBI:30616"/>
        <note>ligand shared between two neighboring subunits</note>
    </ligand>
</feature>
<feature type="binding site" evidence="1">
    <location>
        <position position="264"/>
    </location>
    <ligand>
        <name>ATP</name>
        <dbReference type="ChEBI" id="CHEBI:30616"/>
        <note>ligand shared between two neighboring subunits</note>
    </ligand>
</feature>
<feature type="binding site" evidence="1">
    <location>
        <position position="268"/>
    </location>
    <ligand>
        <name>ATP</name>
        <dbReference type="ChEBI" id="CHEBI:30616"/>
        <note>ligand shared between two neighboring subunits</note>
    </ligand>
</feature>
<feature type="binding site" description="in other chain" evidence="1">
    <location>
        <position position="272"/>
    </location>
    <ligand>
        <name>L-methionine</name>
        <dbReference type="ChEBI" id="CHEBI:57844"/>
        <note>ligand shared between two neighboring subunits</note>
    </ligand>
</feature>
<protein>
    <recommendedName>
        <fullName evidence="1">S-adenosylmethionine synthase</fullName>
        <shortName evidence="1">AdoMet synthase</shortName>
        <ecNumber evidence="1">2.5.1.6</ecNumber>
    </recommendedName>
    <alternativeName>
        <fullName evidence="1">MAT</fullName>
    </alternativeName>
    <alternativeName>
        <fullName evidence="1">Methionine adenosyltransferase</fullName>
    </alternativeName>
</protein>
<keyword id="KW-0067">ATP-binding</keyword>
<keyword id="KW-0963">Cytoplasm</keyword>
<keyword id="KW-0460">Magnesium</keyword>
<keyword id="KW-0479">Metal-binding</keyword>
<keyword id="KW-0547">Nucleotide-binding</keyword>
<keyword id="KW-0554">One-carbon metabolism</keyword>
<keyword id="KW-0630">Potassium</keyword>
<keyword id="KW-0808">Transferase</keyword>
<reference key="1">
    <citation type="journal article" date="2007" name="Environ. Microbiol.">
        <title>Whole-genome analysis of the ammonia-oxidizing bacterium, Nitrosomonas eutropha C91: implications for niche adaptation.</title>
        <authorList>
            <person name="Stein L.Y."/>
            <person name="Arp D.J."/>
            <person name="Berube P.M."/>
            <person name="Chain P.S."/>
            <person name="Hauser L."/>
            <person name="Jetten M.S."/>
            <person name="Klotz M.G."/>
            <person name="Larimer F.W."/>
            <person name="Norton J.M."/>
            <person name="Op den Camp H.J.M."/>
            <person name="Shin M."/>
            <person name="Wei X."/>
        </authorList>
    </citation>
    <scope>NUCLEOTIDE SEQUENCE [LARGE SCALE GENOMIC DNA]</scope>
    <source>
        <strain>DSM 101675 / C91 / Nm57</strain>
    </source>
</reference>
<gene>
    <name evidence="1" type="primary">metK</name>
    <name type="ordered locus">Neut_1893</name>
</gene>